<keyword id="KW-1003">Cell membrane</keyword>
<keyword id="KW-0472">Membrane</keyword>
<keyword id="KW-0812">Transmembrane</keyword>
<keyword id="KW-1133">Transmembrane helix</keyword>
<keyword id="KW-0843">Virulence</keyword>
<organism>
    <name type="scientific">Xanthomonas campestris pv. glycines</name>
    <dbReference type="NCBI Taxonomy" id="473421"/>
    <lineage>
        <taxon>Bacteria</taxon>
        <taxon>Pseudomonadati</taxon>
        <taxon>Pseudomonadota</taxon>
        <taxon>Gammaproteobacteria</taxon>
        <taxon>Lysobacterales</taxon>
        <taxon>Lysobacteraceae</taxon>
        <taxon>Xanthomonas</taxon>
    </lineage>
</organism>
<reference key="1">
    <citation type="journal article" date="1992" name="J. Bacteriol.">
        <title>Cloning and characterization of pathogenicity genes from Xanthomonas campestris pv. glycines.</title>
        <authorList>
            <person name="Hwang I."/>
            <person name="Lim S.M."/>
            <person name="Shaw P.D."/>
        </authorList>
    </citation>
    <scope>NUCLEOTIDE SEQUENCE [GENOMIC DNA]</scope>
</reference>
<dbReference type="EMBL" id="M64094">
    <property type="protein sequence ID" value="AAA69968.1"/>
    <property type="molecule type" value="Genomic_DNA"/>
</dbReference>
<dbReference type="SMR" id="P37828"/>
<dbReference type="GO" id="GO:0005886">
    <property type="term" value="C:plasma membrane"/>
    <property type="evidence" value="ECO:0007669"/>
    <property type="project" value="UniProtKB-SubCell"/>
</dbReference>
<dbReference type="GO" id="GO:0009306">
    <property type="term" value="P:protein secretion"/>
    <property type="evidence" value="ECO:0007669"/>
    <property type="project" value="InterPro"/>
</dbReference>
<dbReference type="InterPro" id="IPR005838">
    <property type="entry name" value="T3SS_IM_P"/>
</dbReference>
<dbReference type="InterPro" id="IPR005773">
    <property type="entry name" value="T3SS_YscR-like"/>
</dbReference>
<dbReference type="NCBIfam" id="NF009438">
    <property type="entry name" value="PRK12797.1"/>
    <property type="match status" value="1"/>
</dbReference>
<dbReference type="NCBIfam" id="TIGR01102">
    <property type="entry name" value="yscR"/>
    <property type="match status" value="1"/>
</dbReference>
<dbReference type="PANTHER" id="PTHR30587">
    <property type="entry name" value="FLAGELLAR BIOSYNTHETIC PROTEIN FLIP"/>
    <property type="match status" value="1"/>
</dbReference>
<dbReference type="PANTHER" id="PTHR30587:SF2">
    <property type="entry name" value="SURFACE PRESENTATION OF ANTIGENS PROTEIN SPAP"/>
    <property type="match status" value="1"/>
</dbReference>
<dbReference type="Pfam" id="PF00813">
    <property type="entry name" value="FliP"/>
    <property type="match status" value="1"/>
</dbReference>
<dbReference type="PRINTS" id="PR01302">
    <property type="entry name" value="TYPE3IMPPROT"/>
</dbReference>
<dbReference type="PROSITE" id="PS01060">
    <property type="entry name" value="FLIP_1"/>
    <property type="match status" value="1"/>
</dbReference>
<dbReference type="PROSITE" id="PS01061">
    <property type="entry name" value="FLIP_2"/>
    <property type="match status" value="1"/>
</dbReference>
<protein>
    <recommendedName>
        <fullName>Pathogenicity-related ORF2</fullName>
    </recommendedName>
</protein>
<evidence type="ECO:0000255" key="1"/>
<evidence type="ECO:0000305" key="2"/>
<sequence length="216" mass="23660">MQMPDVGSLLLVVVIMLGLLPFAAMVVTSYTKIVVVLGLLRNAIGVQQVPPNMVLNGVALLVSCFVMAPVGMEAFKAAAQNYGAGSDNSRVVVLLDACREPFRQFLLKHTREREKAFFMRSAQQIWPKDKAATLKSDDLLVLAPAFTLSELTEAFRIGFLLYLVFIVIDLVVANALMAMGLSQVTPTNVAIPFKLLLFVAMDGWSMLIHGLVLSYR</sequence>
<accession>P37828</accession>
<proteinExistence type="inferred from homology"/>
<feature type="chain" id="PRO_0000192002" description="Pathogenicity-related ORF2">
    <location>
        <begin position="1"/>
        <end position="216"/>
    </location>
</feature>
<feature type="transmembrane region" description="Helical" evidence="1">
    <location>
        <begin position="6"/>
        <end position="26"/>
    </location>
</feature>
<feature type="transmembrane region" description="Helical" evidence="1">
    <location>
        <begin position="55"/>
        <end position="75"/>
    </location>
</feature>
<feature type="transmembrane region" description="Helical" evidence="1">
    <location>
        <begin position="157"/>
        <end position="177"/>
    </location>
</feature>
<feature type="transmembrane region" description="Helical" evidence="1">
    <location>
        <begin position="193"/>
        <end position="213"/>
    </location>
</feature>
<name>PRO2_XANCG</name>
<comment type="function">
    <text>Important for pathogenicity.</text>
</comment>
<comment type="subcellular location">
    <subcellularLocation>
        <location evidence="2">Cell membrane</location>
        <topology evidence="2">Multi-pass membrane protein</topology>
    </subcellularLocation>
</comment>
<comment type="similarity">
    <text evidence="2">Belongs to the FliP/MopC/SpaP family.</text>
</comment>